<organism>
    <name type="scientific">Bacillus thuringiensis (strain Al Hakam)</name>
    <dbReference type="NCBI Taxonomy" id="412694"/>
    <lineage>
        <taxon>Bacteria</taxon>
        <taxon>Bacillati</taxon>
        <taxon>Bacillota</taxon>
        <taxon>Bacilli</taxon>
        <taxon>Bacillales</taxon>
        <taxon>Bacillaceae</taxon>
        <taxon>Bacillus</taxon>
        <taxon>Bacillus cereus group</taxon>
    </lineage>
</organism>
<proteinExistence type="inferred from homology"/>
<feature type="chain" id="PRO_1000049213" description="Small ribosomal subunit protein bS16">
    <location>
        <begin position="1"/>
        <end position="90"/>
    </location>
</feature>
<accession>A0RHL7</accession>
<dbReference type="EMBL" id="CP000485">
    <property type="protein sequence ID" value="ABK86710.1"/>
    <property type="molecule type" value="Genomic_DNA"/>
</dbReference>
<dbReference type="RefSeq" id="WP_000268750.1">
    <property type="nucleotide sequence ID" value="NC_008600.1"/>
</dbReference>
<dbReference type="SMR" id="A0RHL7"/>
<dbReference type="GeneID" id="93007268"/>
<dbReference type="KEGG" id="btl:BALH_3475"/>
<dbReference type="HOGENOM" id="CLU_100590_5_0_9"/>
<dbReference type="GO" id="GO:0005737">
    <property type="term" value="C:cytoplasm"/>
    <property type="evidence" value="ECO:0007669"/>
    <property type="project" value="UniProtKB-ARBA"/>
</dbReference>
<dbReference type="GO" id="GO:0015935">
    <property type="term" value="C:small ribosomal subunit"/>
    <property type="evidence" value="ECO:0007669"/>
    <property type="project" value="TreeGrafter"/>
</dbReference>
<dbReference type="GO" id="GO:0003735">
    <property type="term" value="F:structural constituent of ribosome"/>
    <property type="evidence" value="ECO:0007669"/>
    <property type="project" value="InterPro"/>
</dbReference>
<dbReference type="GO" id="GO:0006412">
    <property type="term" value="P:translation"/>
    <property type="evidence" value="ECO:0007669"/>
    <property type="project" value="UniProtKB-UniRule"/>
</dbReference>
<dbReference type="FunFam" id="3.30.1320.10:FF:000002">
    <property type="entry name" value="30S ribosomal protein S16"/>
    <property type="match status" value="1"/>
</dbReference>
<dbReference type="Gene3D" id="3.30.1320.10">
    <property type="match status" value="1"/>
</dbReference>
<dbReference type="HAMAP" id="MF_00385">
    <property type="entry name" value="Ribosomal_bS16"/>
    <property type="match status" value="1"/>
</dbReference>
<dbReference type="InterPro" id="IPR000307">
    <property type="entry name" value="Ribosomal_bS16"/>
</dbReference>
<dbReference type="InterPro" id="IPR020592">
    <property type="entry name" value="Ribosomal_bS16_CS"/>
</dbReference>
<dbReference type="InterPro" id="IPR023803">
    <property type="entry name" value="Ribosomal_bS16_dom_sf"/>
</dbReference>
<dbReference type="NCBIfam" id="TIGR00002">
    <property type="entry name" value="S16"/>
    <property type="match status" value="1"/>
</dbReference>
<dbReference type="PANTHER" id="PTHR12919">
    <property type="entry name" value="30S RIBOSOMAL PROTEIN S16"/>
    <property type="match status" value="1"/>
</dbReference>
<dbReference type="PANTHER" id="PTHR12919:SF20">
    <property type="entry name" value="SMALL RIBOSOMAL SUBUNIT PROTEIN BS16M"/>
    <property type="match status" value="1"/>
</dbReference>
<dbReference type="Pfam" id="PF00886">
    <property type="entry name" value="Ribosomal_S16"/>
    <property type="match status" value="1"/>
</dbReference>
<dbReference type="SUPFAM" id="SSF54565">
    <property type="entry name" value="Ribosomal protein S16"/>
    <property type="match status" value="1"/>
</dbReference>
<dbReference type="PROSITE" id="PS00732">
    <property type="entry name" value="RIBOSOMAL_S16"/>
    <property type="match status" value="1"/>
</dbReference>
<reference key="1">
    <citation type="journal article" date="2007" name="J. Bacteriol.">
        <title>The complete genome sequence of Bacillus thuringiensis Al Hakam.</title>
        <authorList>
            <person name="Challacombe J.F."/>
            <person name="Altherr M.R."/>
            <person name="Xie G."/>
            <person name="Bhotika S.S."/>
            <person name="Brown N."/>
            <person name="Bruce D."/>
            <person name="Campbell C.S."/>
            <person name="Campbell M.L."/>
            <person name="Chen J."/>
            <person name="Chertkov O."/>
            <person name="Cleland C."/>
            <person name="Dimitrijevic M."/>
            <person name="Doggett N.A."/>
            <person name="Fawcett J.J."/>
            <person name="Glavina T."/>
            <person name="Goodwin L.A."/>
            <person name="Green L.D."/>
            <person name="Han C.S."/>
            <person name="Hill K.K."/>
            <person name="Hitchcock P."/>
            <person name="Jackson P.J."/>
            <person name="Keim P."/>
            <person name="Kewalramani A.R."/>
            <person name="Longmire J."/>
            <person name="Lucas S."/>
            <person name="Malfatti S."/>
            <person name="Martinez D."/>
            <person name="McMurry K."/>
            <person name="Meincke L.J."/>
            <person name="Misra M."/>
            <person name="Moseman B.L."/>
            <person name="Mundt M."/>
            <person name="Munk A.C."/>
            <person name="Okinaka R.T."/>
            <person name="Parson-Quintana B."/>
            <person name="Reilly L.P."/>
            <person name="Richardson P."/>
            <person name="Robinson D.L."/>
            <person name="Saunders E."/>
            <person name="Tapia R."/>
            <person name="Tesmer J.G."/>
            <person name="Thayer N."/>
            <person name="Thompson L.S."/>
            <person name="Tice H."/>
            <person name="Ticknor L.O."/>
            <person name="Wills P.L."/>
            <person name="Gilna P."/>
            <person name="Brettin T.S."/>
        </authorList>
    </citation>
    <scope>NUCLEOTIDE SEQUENCE [LARGE SCALE GENOMIC DNA]</scope>
    <source>
        <strain>Al Hakam</strain>
    </source>
</reference>
<protein>
    <recommendedName>
        <fullName evidence="1">Small ribosomal subunit protein bS16</fullName>
    </recommendedName>
    <alternativeName>
        <fullName evidence="2">30S ribosomal protein S16</fullName>
    </alternativeName>
</protein>
<gene>
    <name evidence="1" type="primary">rpsP</name>
    <name type="ordered locus">BALH_3475</name>
</gene>
<evidence type="ECO:0000255" key="1">
    <source>
        <dbReference type="HAMAP-Rule" id="MF_00385"/>
    </source>
</evidence>
<evidence type="ECO:0000305" key="2"/>
<sequence length="90" mass="10118">MAVKIRLKRMGAKKTPFYRVVVADSRSPRDGRFIEEIGTYNPVAQPAEVKINEEAALKWLGNGAKPSDTVRNLFSNQGIMEKFHLSKQGK</sequence>
<comment type="similarity">
    <text evidence="1">Belongs to the bacterial ribosomal protein bS16 family.</text>
</comment>
<name>RS16_BACAH</name>
<keyword id="KW-0687">Ribonucleoprotein</keyword>
<keyword id="KW-0689">Ribosomal protein</keyword>